<accession>P25749</accession>
<reference key="1">
    <citation type="journal article" date="1992" name="J. Bacteriol.">
        <title>Structures of chaperonins from an intracellular symbiont and their functional expression in Escherichia coli groE mutants.</title>
        <authorList>
            <person name="Ohtaka C."/>
            <person name="Nakamura H."/>
            <person name="Ishikawa H."/>
        </authorList>
    </citation>
    <scope>NUCLEOTIDE SEQUENCE [GENOMIC DNA]</scope>
</reference>
<reference key="2">
    <citation type="journal article" date="2000" name="Nature">
        <title>Genome sequence of the endocellular bacterial symbiont of aphids Buchnera sp. APS.</title>
        <authorList>
            <person name="Shigenobu S."/>
            <person name="Watanabe H."/>
            <person name="Hattori M."/>
            <person name="Sakaki Y."/>
            <person name="Ishikawa H."/>
        </authorList>
    </citation>
    <scope>NUCLEOTIDE SEQUENCE [LARGE SCALE GENOMIC DNA]</scope>
    <source>
        <strain>APS</strain>
    </source>
</reference>
<name>CH10_BUCAI</name>
<gene>
    <name evidence="1" type="primary">groES</name>
    <name evidence="1" type="synonym">groS</name>
    <name type="synonym">mopB</name>
    <name type="synonym">symS</name>
    <name type="ordered locus">BU018</name>
</gene>
<proteinExistence type="inferred from homology"/>
<evidence type="ECO:0000255" key="1">
    <source>
        <dbReference type="HAMAP-Rule" id="MF_00580"/>
    </source>
</evidence>
<evidence type="ECO:0000305" key="2"/>
<feature type="chain" id="PRO_0000174712" description="Co-chaperonin GroES">
    <location>
        <begin position="1"/>
        <end position="96"/>
    </location>
</feature>
<dbReference type="EMBL" id="X61150">
    <property type="protein sequence ID" value="CAA43459.1"/>
    <property type="molecule type" value="Genomic_DNA"/>
</dbReference>
<dbReference type="EMBL" id="BA000003">
    <property type="protein sequence ID" value="BAB12745.1"/>
    <property type="molecule type" value="Genomic_DNA"/>
</dbReference>
<dbReference type="RefSeq" id="NP_239859.1">
    <property type="nucleotide sequence ID" value="NC_002528.1"/>
</dbReference>
<dbReference type="RefSeq" id="WP_009873979.1">
    <property type="nucleotide sequence ID" value="NZ_AP036055.1"/>
</dbReference>
<dbReference type="SMR" id="P25749"/>
<dbReference type="STRING" id="563178.BUAP5A_018"/>
<dbReference type="EnsemblBacteria" id="BAB12745">
    <property type="protein sequence ID" value="BAB12745"/>
    <property type="gene ID" value="BAB12745"/>
</dbReference>
<dbReference type="KEGG" id="buc:BU018"/>
<dbReference type="PATRIC" id="fig|107806.10.peg.30"/>
<dbReference type="eggNOG" id="COG0234">
    <property type="taxonomic scope" value="Bacteria"/>
</dbReference>
<dbReference type="HOGENOM" id="CLU_132825_1_1_6"/>
<dbReference type="Proteomes" id="UP000001806">
    <property type="component" value="Chromosome"/>
</dbReference>
<dbReference type="GO" id="GO:0005737">
    <property type="term" value="C:cytoplasm"/>
    <property type="evidence" value="ECO:0007669"/>
    <property type="project" value="UniProtKB-SubCell"/>
</dbReference>
<dbReference type="GO" id="GO:0005524">
    <property type="term" value="F:ATP binding"/>
    <property type="evidence" value="ECO:0007669"/>
    <property type="project" value="InterPro"/>
</dbReference>
<dbReference type="GO" id="GO:0046872">
    <property type="term" value="F:metal ion binding"/>
    <property type="evidence" value="ECO:0007669"/>
    <property type="project" value="TreeGrafter"/>
</dbReference>
<dbReference type="GO" id="GO:0044183">
    <property type="term" value="F:protein folding chaperone"/>
    <property type="evidence" value="ECO:0007669"/>
    <property type="project" value="InterPro"/>
</dbReference>
<dbReference type="GO" id="GO:0051087">
    <property type="term" value="F:protein-folding chaperone binding"/>
    <property type="evidence" value="ECO:0007669"/>
    <property type="project" value="TreeGrafter"/>
</dbReference>
<dbReference type="GO" id="GO:0051082">
    <property type="term" value="F:unfolded protein binding"/>
    <property type="evidence" value="ECO:0007669"/>
    <property type="project" value="TreeGrafter"/>
</dbReference>
<dbReference type="GO" id="GO:0051085">
    <property type="term" value="P:chaperone cofactor-dependent protein refolding"/>
    <property type="evidence" value="ECO:0007669"/>
    <property type="project" value="TreeGrafter"/>
</dbReference>
<dbReference type="CDD" id="cd00320">
    <property type="entry name" value="cpn10"/>
    <property type="match status" value="1"/>
</dbReference>
<dbReference type="FunFam" id="2.30.33.40:FF:000001">
    <property type="entry name" value="10 kDa chaperonin"/>
    <property type="match status" value="1"/>
</dbReference>
<dbReference type="Gene3D" id="2.30.33.40">
    <property type="entry name" value="GroES chaperonin"/>
    <property type="match status" value="1"/>
</dbReference>
<dbReference type="HAMAP" id="MF_00580">
    <property type="entry name" value="CH10"/>
    <property type="match status" value="1"/>
</dbReference>
<dbReference type="InterPro" id="IPR020818">
    <property type="entry name" value="Chaperonin_GroES"/>
</dbReference>
<dbReference type="InterPro" id="IPR037124">
    <property type="entry name" value="Chaperonin_GroES_sf"/>
</dbReference>
<dbReference type="InterPro" id="IPR018369">
    <property type="entry name" value="Chaprnonin_Cpn10_CS"/>
</dbReference>
<dbReference type="InterPro" id="IPR011032">
    <property type="entry name" value="GroES-like_sf"/>
</dbReference>
<dbReference type="NCBIfam" id="NF001526">
    <property type="entry name" value="PRK00364.1-1"/>
    <property type="match status" value="1"/>
</dbReference>
<dbReference type="NCBIfam" id="NF001531">
    <property type="entry name" value="PRK00364.2-2"/>
    <property type="match status" value="1"/>
</dbReference>
<dbReference type="PANTHER" id="PTHR10772">
    <property type="entry name" value="10 KDA HEAT SHOCK PROTEIN"/>
    <property type="match status" value="1"/>
</dbReference>
<dbReference type="PANTHER" id="PTHR10772:SF58">
    <property type="entry name" value="CO-CHAPERONIN GROES"/>
    <property type="match status" value="1"/>
</dbReference>
<dbReference type="Pfam" id="PF00166">
    <property type="entry name" value="Cpn10"/>
    <property type="match status" value="1"/>
</dbReference>
<dbReference type="PRINTS" id="PR00297">
    <property type="entry name" value="CHAPERONIN10"/>
</dbReference>
<dbReference type="SMART" id="SM00883">
    <property type="entry name" value="Cpn10"/>
    <property type="match status" value="1"/>
</dbReference>
<dbReference type="SUPFAM" id="SSF50129">
    <property type="entry name" value="GroES-like"/>
    <property type="match status" value="1"/>
</dbReference>
<dbReference type="PROSITE" id="PS00681">
    <property type="entry name" value="CHAPERONINS_CPN10"/>
    <property type="match status" value="1"/>
</dbReference>
<keyword id="KW-0143">Chaperone</keyword>
<keyword id="KW-0963">Cytoplasm</keyword>
<keyword id="KW-1185">Reference proteome</keyword>
<organism>
    <name type="scientific">Buchnera aphidicola subsp. Acyrthosiphon pisum (strain APS)</name>
    <name type="common">Acyrthosiphon pisum symbiotic bacterium</name>
    <dbReference type="NCBI Taxonomy" id="107806"/>
    <lineage>
        <taxon>Bacteria</taxon>
        <taxon>Pseudomonadati</taxon>
        <taxon>Pseudomonadota</taxon>
        <taxon>Gammaproteobacteria</taxon>
        <taxon>Enterobacterales</taxon>
        <taxon>Erwiniaceae</taxon>
        <taxon>Buchnera</taxon>
    </lineage>
</organism>
<comment type="function">
    <text evidence="1">Together with the chaperonin GroEL, plays an essential role in assisting protein folding. The GroEL-GroES system forms a nano-cage that allows encapsulation of the non-native substrate proteins and provides a physical environment optimized to promote and accelerate protein folding. GroES binds to the apical surface of the GroEL ring, thereby capping the opening of the GroEL channel.</text>
</comment>
<comment type="subunit">
    <text evidence="1">Heptamer of 7 subunits arranged in a ring. Interacts with the chaperonin GroEL.</text>
</comment>
<comment type="subcellular location">
    <subcellularLocation>
        <location evidence="1">Cytoplasm</location>
    </subcellularLocation>
</comment>
<comment type="similarity">
    <text evidence="1 2">Belongs to the GroES chaperonin family.</text>
</comment>
<protein>
    <recommendedName>
        <fullName evidence="1">Co-chaperonin GroES</fullName>
    </recommendedName>
    <alternativeName>
        <fullName evidence="1">10 kDa chaperonin</fullName>
    </alternativeName>
    <alternativeName>
        <fullName evidence="1">Chaperonin-10</fullName>
        <shortName evidence="1">Cpn10</shortName>
    </alternativeName>
</protein>
<sequence>MKIRPLHDRVLVKRQEVESKSAGGIVLTGSAAGKSTRGTVTAVGKGRVLDNGDIKPLDVKVGDVVIFNEGYGAKTEKIDNEELLILTESDILAIVE</sequence>